<organism>
    <name type="scientific">Bacteroides thetaiotaomicron (strain ATCC 29148 / DSM 2079 / JCM 5827 / CCUG 10774 / NCTC 10582 / VPI-5482 / E50)</name>
    <dbReference type="NCBI Taxonomy" id="226186"/>
    <lineage>
        <taxon>Bacteria</taxon>
        <taxon>Pseudomonadati</taxon>
        <taxon>Bacteroidota</taxon>
        <taxon>Bacteroidia</taxon>
        <taxon>Bacteroidales</taxon>
        <taxon>Bacteroidaceae</taxon>
        <taxon>Bacteroides</taxon>
    </lineage>
</organism>
<gene>
    <name evidence="1" type="primary">htpG</name>
    <name type="ordered locus">BT_0897</name>
</gene>
<sequence length="681" mass="78437">MQKGNIGVTTENIFPIIKKFLYSDHEIFLRELVSNAVDATQKLNTLASIGEFKGELGDLTIHVELGKDTITISDRGIGLTAEEIEKYINQIAFSGANDFLEKYKDDANAIIGHFGLGFYSAFMVAKKVEIITKSYRDEAQAIKWTCDGSPEFTIEEVDKADRGSDIILYIDDDCKEFLEEARVSELLKKYCSFLPVPIAFGKKKEWKDGKQIETTEDNIINDTTPLWTRKPSELSDEDYKSFYTKLYPMSDEPLFWIHLNVDYPFHLTGILYFPKVKSNIELNKNKIQLYCNQVYVTDSVEGIVPDFLTLLHGVIDSPDIPLNVSRSYLQSDSNVKKISTYITKKVSDRLQSIFKNDRKQFEEKWNDLKIFINYGMLTQEDFYEKAQKFALFTDTDNKHYTFEEYQTLIKDNQTDKDGNLIYLYANNKDEQFSYIEAATNKGYNVLLMDGQLDVAMVSMLEQKFEKSRFTRVDSDVIDNLIIKEDKKNETLEGEKQEAITTAFKSQLPKMDKVEFNVMTQALGDNSAPVMITQSEYMRRMKEMANIQAGMSFYGEMPDMFNLVLNSDHKLIKQVLDEEEAACHPEVAPIQTEMNSVSKRRNELKDSQKDKKEEDIPTAEKDELNELDKKWDELKNKKEGIFAGYASNNKVIRQLIDLALLQNNMLKGEALNNFVKRSIELI</sequence>
<proteinExistence type="inferred from homology"/>
<reference key="1">
    <citation type="journal article" date="2003" name="Science">
        <title>A genomic view of the human-Bacteroides thetaiotaomicron symbiosis.</title>
        <authorList>
            <person name="Xu J."/>
            <person name="Bjursell M.K."/>
            <person name="Himrod J."/>
            <person name="Deng S."/>
            <person name="Carmichael L.K."/>
            <person name="Chiang H.C."/>
            <person name="Hooper L.V."/>
            <person name="Gordon J.I."/>
        </authorList>
    </citation>
    <scope>NUCLEOTIDE SEQUENCE [LARGE SCALE GENOMIC DNA]</scope>
    <source>
        <strain>ATCC 29148 / DSM 2079 / JCM 5827 / CCUG 10774 / NCTC 10582 / VPI-5482 / E50</strain>
    </source>
</reference>
<evidence type="ECO:0000255" key="1">
    <source>
        <dbReference type="HAMAP-Rule" id="MF_00505"/>
    </source>
</evidence>
<evidence type="ECO:0000256" key="2">
    <source>
        <dbReference type="SAM" id="MobiDB-lite"/>
    </source>
</evidence>
<accession>Q8A9B8</accession>
<protein>
    <recommendedName>
        <fullName evidence="1">Chaperone protein HtpG</fullName>
    </recommendedName>
    <alternativeName>
        <fullName evidence="1">Heat shock protein HtpG</fullName>
    </alternativeName>
    <alternativeName>
        <fullName evidence="1">High temperature protein G</fullName>
    </alternativeName>
</protein>
<feature type="chain" id="PRO_0000236984" description="Chaperone protein HtpG">
    <location>
        <begin position="1"/>
        <end position="681"/>
    </location>
</feature>
<feature type="region of interest" description="A; substrate-binding" evidence="1">
    <location>
        <begin position="1"/>
        <end position="326"/>
    </location>
</feature>
<feature type="region of interest" description="B" evidence="1">
    <location>
        <begin position="327"/>
        <end position="545"/>
    </location>
</feature>
<feature type="region of interest" description="C" evidence="1">
    <location>
        <begin position="546"/>
        <end position="681"/>
    </location>
</feature>
<feature type="region of interest" description="Disordered" evidence="2">
    <location>
        <begin position="589"/>
        <end position="620"/>
    </location>
</feature>
<feature type="compositionally biased region" description="Basic and acidic residues" evidence="2">
    <location>
        <begin position="599"/>
        <end position="620"/>
    </location>
</feature>
<name>HTPG_BACTN</name>
<dbReference type="EMBL" id="AE015928">
    <property type="protein sequence ID" value="AAO76004.1"/>
    <property type="molecule type" value="Genomic_DNA"/>
</dbReference>
<dbReference type="RefSeq" id="NP_809810.1">
    <property type="nucleotide sequence ID" value="NC_004663.1"/>
</dbReference>
<dbReference type="RefSeq" id="WP_008765725.1">
    <property type="nucleotide sequence ID" value="NC_004663.1"/>
</dbReference>
<dbReference type="SMR" id="Q8A9B8"/>
<dbReference type="FunCoup" id="Q8A9B8">
    <property type="interactions" value="456"/>
</dbReference>
<dbReference type="STRING" id="226186.BT_0897"/>
<dbReference type="PaxDb" id="226186-BT_0897"/>
<dbReference type="EnsemblBacteria" id="AAO76004">
    <property type="protein sequence ID" value="AAO76004"/>
    <property type="gene ID" value="BT_0897"/>
</dbReference>
<dbReference type="GeneID" id="60926870"/>
<dbReference type="KEGG" id="bth:BT_0897"/>
<dbReference type="PATRIC" id="fig|226186.12.peg.909"/>
<dbReference type="eggNOG" id="COG0326">
    <property type="taxonomic scope" value="Bacteria"/>
</dbReference>
<dbReference type="HOGENOM" id="CLU_006684_3_2_10"/>
<dbReference type="InParanoid" id="Q8A9B8"/>
<dbReference type="OrthoDB" id="9802640at2"/>
<dbReference type="Proteomes" id="UP000001414">
    <property type="component" value="Chromosome"/>
</dbReference>
<dbReference type="GO" id="GO:0005829">
    <property type="term" value="C:cytosol"/>
    <property type="evidence" value="ECO:0000318"/>
    <property type="project" value="GO_Central"/>
</dbReference>
<dbReference type="GO" id="GO:0005524">
    <property type="term" value="F:ATP binding"/>
    <property type="evidence" value="ECO:0000318"/>
    <property type="project" value="GO_Central"/>
</dbReference>
<dbReference type="GO" id="GO:0016887">
    <property type="term" value="F:ATP hydrolysis activity"/>
    <property type="evidence" value="ECO:0000318"/>
    <property type="project" value="GO_Central"/>
</dbReference>
<dbReference type="GO" id="GO:0140662">
    <property type="term" value="F:ATP-dependent protein folding chaperone"/>
    <property type="evidence" value="ECO:0007669"/>
    <property type="project" value="InterPro"/>
</dbReference>
<dbReference type="GO" id="GO:0051082">
    <property type="term" value="F:unfolded protein binding"/>
    <property type="evidence" value="ECO:0000318"/>
    <property type="project" value="GO_Central"/>
</dbReference>
<dbReference type="GO" id="GO:0006974">
    <property type="term" value="P:DNA damage response"/>
    <property type="evidence" value="ECO:0000318"/>
    <property type="project" value="GO_Central"/>
</dbReference>
<dbReference type="GO" id="GO:0006457">
    <property type="term" value="P:protein folding"/>
    <property type="evidence" value="ECO:0000318"/>
    <property type="project" value="GO_Central"/>
</dbReference>
<dbReference type="GO" id="GO:0009408">
    <property type="term" value="P:response to heat"/>
    <property type="evidence" value="ECO:0000318"/>
    <property type="project" value="GO_Central"/>
</dbReference>
<dbReference type="CDD" id="cd16927">
    <property type="entry name" value="HATPase_Hsp90-like"/>
    <property type="match status" value="1"/>
</dbReference>
<dbReference type="FunFam" id="3.30.230.80:FF:000008">
    <property type="entry name" value="Molecular chaperone HtpG"/>
    <property type="match status" value="1"/>
</dbReference>
<dbReference type="FunFam" id="3.30.565.10:FF:000076">
    <property type="entry name" value="Molecular chaperone HtpG"/>
    <property type="match status" value="1"/>
</dbReference>
<dbReference type="Gene3D" id="3.30.230.80">
    <property type="match status" value="1"/>
</dbReference>
<dbReference type="Gene3D" id="3.40.50.11260">
    <property type="match status" value="1"/>
</dbReference>
<dbReference type="Gene3D" id="1.20.120.790">
    <property type="entry name" value="Heat shock protein 90, C-terminal domain"/>
    <property type="match status" value="1"/>
</dbReference>
<dbReference type="Gene3D" id="3.30.565.10">
    <property type="entry name" value="Histidine kinase-like ATPase, C-terminal domain"/>
    <property type="match status" value="1"/>
</dbReference>
<dbReference type="HAMAP" id="MF_00505">
    <property type="entry name" value="HSP90"/>
    <property type="match status" value="1"/>
</dbReference>
<dbReference type="InterPro" id="IPR036890">
    <property type="entry name" value="HATPase_C_sf"/>
</dbReference>
<dbReference type="InterPro" id="IPR019805">
    <property type="entry name" value="Heat_shock_protein_90_CS"/>
</dbReference>
<dbReference type="InterPro" id="IPR037196">
    <property type="entry name" value="HSP90_C"/>
</dbReference>
<dbReference type="InterPro" id="IPR001404">
    <property type="entry name" value="Hsp90_fam"/>
</dbReference>
<dbReference type="InterPro" id="IPR020575">
    <property type="entry name" value="Hsp90_N"/>
</dbReference>
<dbReference type="InterPro" id="IPR020568">
    <property type="entry name" value="Ribosomal_Su5_D2-typ_SF"/>
</dbReference>
<dbReference type="NCBIfam" id="NF003555">
    <property type="entry name" value="PRK05218.1"/>
    <property type="match status" value="1"/>
</dbReference>
<dbReference type="PANTHER" id="PTHR11528">
    <property type="entry name" value="HEAT SHOCK PROTEIN 90 FAMILY MEMBER"/>
    <property type="match status" value="1"/>
</dbReference>
<dbReference type="Pfam" id="PF13589">
    <property type="entry name" value="HATPase_c_3"/>
    <property type="match status" value="1"/>
</dbReference>
<dbReference type="Pfam" id="PF00183">
    <property type="entry name" value="HSP90"/>
    <property type="match status" value="1"/>
</dbReference>
<dbReference type="PIRSF" id="PIRSF002583">
    <property type="entry name" value="Hsp90"/>
    <property type="match status" value="1"/>
</dbReference>
<dbReference type="PRINTS" id="PR00775">
    <property type="entry name" value="HEATSHOCK90"/>
</dbReference>
<dbReference type="SUPFAM" id="SSF55874">
    <property type="entry name" value="ATPase domain of HSP90 chaperone/DNA topoisomerase II/histidine kinase"/>
    <property type="match status" value="1"/>
</dbReference>
<dbReference type="SUPFAM" id="SSF54211">
    <property type="entry name" value="Ribosomal protein S5 domain 2-like"/>
    <property type="match status" value="1"/>
</dbReference>
<dbReference type="PROSITE" id="PS00298">
    <property type="entry name" value="HSP90"/>
    <property type="match status" value="1"/>
</dbReference>
<comment type="function">
    <text evidence="1">Molecular chaperone. Has ATPase activity.</text>
</comment>
<comment type="subunit">
    <text evidence="1">Homodimer.</text>
</comment>
<comment type="subcellular location">
    <subcellularLocation>
        <location evidence="1">Cytoplasm</location>
    </subcellularLocation>
</comment>
<comment type="similarity">
    <text evidence="1">Belongs to the heat shock protein 90 family.</text>
</comment>
<keyword id="KW-0067">ATP-binding</keyword>
<keyword id="KW-0143">Chaperone</keyword>
<keyword id="KW-0963">Cytoplasm</keyword>
<keyword id="KW-0547">Nucleotide-binding</keyword>
<keyword id="KW-1185">Reference proteome</keyword>
<keyword id="KW-0346">Stress response</keyword>